<sequence length="466" mass="49636">MAKTLYEKVWDSHVVVAPEGEAPIIYVDRHLVHEVTSPQAFSGVKVAGRQLRAPQKTFATMDHNTSTTSASLDALSPMARTQVETLEQNCKEFGVRLYDIHHKNQGIVHVMGPELGITLPGTVIVCGDSHTATHGAFGALAFGIGTSEVEHVMATQTLRQLKAKTMKIEVRGHVASGITAKDIVLAIIGKIGMDGGTGYVVEFCGEAIEALSMEGRMTVCNMAIEMGAKAGMIAPDATTAEYLEGREFSPKGESWSQAVAAWEQLKTDEGAVFDASVVLDAIDIAPQLTWGTNPGQVVAIDQLVPNPLDATNSTVRSSIEKALEYVDLTAGTLMTDVSINKVFIGSCTNSRIEDLRAAAVHAKGRKVADGVKAIVVPGSGLVKEQAEAEGLDKIFTDAGFEWRLPGCSMCLAMNDDKLEAGDRCASTSNRNFEGRQGRGSRTHLVSPAMAAAAAVAGHFVDIRKPY</sequence>
<name>LEUC_SHEPA</name>
<dbReference type="EC" id="4.2.1.33" evidence="1"/>
<dbReference type="EMBL" id="CP000851">
    <property type="protein sequence ID" value="ABV89136.1"/>
    <property type="molecule type" value="Genomic_DNA"/>
</dbReference>
<dbReference type="RefSeq" id="WP_012157018.1">
    <property type="nucleotide sequence ID" value="NC_009901.1"/>
</dbReference>
<dbReference type="SMR" id="A8H999"/>
<dbReference type="STRING" id="398579.Spea_3826"/>
<dbReference type="KEGG" id="spl:Spea_3826"/>
<dbReference type="eggNOG" id="COG0065">
    <property type="taxonomic scope" value="Bacteria"/>
</dbReference>
<dbReference type="HOGENOM" id="CLU_006714_3_4_6"/>
<dbReference type="OrthoDB" id="9802769at2"/>
<dbReference type="UniPathway" id="UPA00048">
    <property type="reaction ID" value="UER00071"/>
</dbReference>
<dbReference type="Proteomes" id="UP000002608">
    <property type="component" value="Chromosome"/>
</dbReference>
<dbReference type="GO" id="GO:0003861">
    <property type="term" value="F:3-isopropylmalate dehydratase activity"/>
    <property type="evidence" value="ECO:0007669"/>
    <property type="project" value="UniProtKB-UniRule"/>
</dbReference>
<dbReference type="GO" id="GO:0051539">
    <property type="term" value="F:4 iron, 4 sulfur cluster binding"/>
    <property type="evidence" value="ECO:0007669"/>
    <property type="project" value="UniProtKB-KW"/>
</dbReference>
<dbReference type="GO" id="GO:0046872">
    <property type="term" value="F:metal ion binding"/>
    <property type="evidence" value="ECO:0007669"/>
    <property type="project" value="UniProtKB-KW"/>
</dbReference>
<dbReference type="GO" id="GO:0009098">
    <property type="term" value="P:L-leucine biosynthetic process"/>
    <property type="evidence" value="ECO:0007669"/>
    <property type="project" value="UniProtKB-UniRule"/>
</dbReference>
<dbReference type="CDD" id="cd01583">
    <property type="entry name" value="IPMI"/>
    <property type="match status" value="1"/>
</dbReference>
<dbReference type="FunFam" id="3.30.499.10:FF:000006">
    <property type="entry name" value="3-isopropylmalate dehydratase large subunit"/>
    <property type="match status" value="1"/>
</dbReference>
<dbReference type="FunFam" id="3.30.499.10:FF:000007">
    <property type="entry name" value="3-isopropylmalate dehydratase large subunit"/>
    <property type="match status" value="1"/>
</dbReference>
<dbReference type="Gene3D" id="3.30.499.10">
    <property type="entry name" value="Aconitase, domain 3"/>
    <property type="match status" value="2"/>
</dbReference>
<dbReference type="HAMAP" id="MF_01026">
    <property type="entry name" value="LeuC_type1"/>
    <property type="match status" value="1"/>
</dbReference>
<dbReference type="InterPro" id="IPR004430">
    <property type="entry name" value="3-IsopropMal_deHydase_lsu"/>
</dbReference>
<dbReference type="InterPro" id="IPR015931">
    <property type="entry name" value="Acnase/IPM_dHydase_lsu_aba_1/3"/>
</dbReference>
<dbReference type="InterPro" id="IPR001030">
    <property type="entry name" value="Acoase/IPM_deHydtase_lsu_aba"/>
</dbReference>
<dbReference type="InterPro" id="IPR018136">
    <property type="entry name" value="Aconitase_4Fe-4S_BS"/>
</dbReference>
<dbReference type="InterPro" id="IPR036008">
    <property type="entry name" value="Aconitase_4Fe-4S_dom"/>
</dbReference>
<dbReference type="InterPro" id="IPR050067">
    <property type="entry name" value="IPM_dehydratase_rel_enz"/>
</dbReference>
<dbReference type="InterPro" id="IPR033941">
    <property type="entry name" value="IPMI_cat"/>
</dbReference>
<dbReference type="NCBIfam" id="TIGR00170">
    <property type="entry name" value="leuC"/>
    <property type="match status" value="1"/>
</dbReference>
<dbReference type="NCBIfam" id="NF004016">
    <property type="entry name" value="PRK05478.1"/>
    <property type="match status" value="1"/>
</dbReference>
<dbReference type="NCBIfam" id="NF009116">
    <property type="entry name" value="PRK12466.1"/>
    <property type="match status" value="1"/>
</dbReference>
<dbReference type="PANTHER" id="PTHR43822:SF9">
    <property type="entry name" value="3-ISOPROPYLMALATE DEHYDRATASE"/>
    <property type="match status" value="1"/>
</dbReference>
<dbReference type="PANTHER" id="PTHR43822">
    <property type="entry name" value="HOMOACONITASE, MITOCHONDRIAL-RELATED"/>
    <property type="match status" value="1"/>
</dbReference>
<dbReference type="Pfam" id="PF00330">
    <property type="entry name" value="Aconitase"/>
    <property type="match status" value="1"/>
</dbReference>
<dbReference type="PRINTS" id="PR00415">
    <property type="entry name" value="ACONITASE"/>
</dbReference>
<dbReference type="SUPFAM" id="SSF53732">
    <property type="entry name" value="Aconitase iron-sulfur domain"/>
    <property type="match status" value="1"/>
</dbReference>
<dbReference type="PROSITE" id="PS00450">
    <property type="entry name" value="ACONITASE_1"/>
    <property type="match status" value="1"/>
</dbReference>
<dbReference type="PROSITE" id="PS01244">
    <property type="entry name" value="ACONITASE_2"/>
    <property type="match status" value="1"/>
</dbReference>
<feature type="chain" id="PRO_1000084227" description="3-isopropylmalate dehydratase large subunit">
    <location>
        <begin position="1"/>
        <end position="466"/>
    </location>
</feature>
<feature type="binding site" evidence="1">
    <location>
        <position position="347"/>
    </location>
    <ligand>
        <name>[4Fe-4S] cluster</name>
        <dbReference type="ChEBI" id="CHEBI:49883"/>
    </ligand>
</feature>
<feature type="binding site" evidence="1">
    <location>
        <position position="407"/>
    </location>
    <ligand>
        <name>[4Fe-4S] cluster</name>
        <dbReference type="ChEBI" id="CHEBI:49883"/>
    </ligand>
</feature>
<feature type="binding site" evidence="1">
    <location>
        <position position="410"/>
    </location>
    <ligand>
        <name>[4Fe-4S] cluster</name>
        <dbReference type="ChEBI" id="CHEBI:49883"/>
    </ligand>
</feature>
<evidence type="ECO:0000255" key="1">
    <source>
        <dbReference type="HAMAP-Rule" id="MF_01026"/>
    </source>
</evidence>
<comment type="function">
    <text evidence="1">Catalyzes the isomerization between 2-isopropylmalate and 3-isopropylmalate, via the formation of 2-isopropylmaleate.</text>
</comment>
<comment type="catalytic activity">
    <reaction evidence="1">
        <text>(2R,3S)-3-isopropylmalate = (2S)-2-isopropylmalate</text>
        <dbReference type="Rhea" id="RHEA:32287"/>
        <dbReference type="ChEBI" id="CHEBI:1178"/>
        <dbReference type="ChEBI" id="CHEBI:35121"/>
        <dbReference type="EC" id="4.2.1.33"/>
    </reaction>
</comment>
<comment type="cofactor">
    <cofactor evidence="1">
        <name>[4Fe-4S] cluster</name>
        <dbReference type="ChEBI" id="CHEBI:49883"/>
    </cofactor>
    <text evidence="1">Binds 1 [4Fe-4S] cluster per subunit.</text>
</comment>
<comment type="pathway">
    <text evidence="1">Amino-acid biosynthesis; L-leucine biosynthesis; L-leucine from 3-methyl-2-oxobutanoate: step 2/4.</text>
</comment>
<comment type="subunit">
    <text evidence="1">Heterodimer of LeuC and LeuD.</text>
</comment>
<comment type="similarity">
    <text evidence="1">Belongs to the aconitase/IPM isomerase family. LeuC type 1 subfamily.</text>
</comment>
<proteinExistence type="inferred from homology"/>
<keyword id="KW-0004">4Fe-4S</keyword>
<keyword id="KW-0028">Amino-acid biosynthesis</keyword>
<keyword id="KW-0100">Branched-chain amino acid biosynthesis</keyword>
<keyword id="KW-0408">Iron</keyword>
<keyword id="KW-0411">Iron-sulfur</keyword>
<keyword id="KW-0432">Leucine biosynthesis</keyword>
<keyword id="KW-0456">Lyase</keyword>
<keyword id="KW-0479">Metal-binding</keyword>
<keyword id="KW-1185">Reference proteome</keyword>
<accession>A8H999</accession>
<organism>
    <name type="scientific">Shewanella pealeana (strain ATCC 700345 / ANG-SQ1)</name>
    <dbReference type="NCBI Taxonomy" id="398579"/>
    <lineage>
        <taxon>Bacteria</taxon>
        <taxon>Pseudomonadati</taxon>
        <taxon>Pseudomonadota</taxon>
        <taxon>Gammaproteobacteria</taxon>
        <taxon>Alteromonadales</taxon>
        <taxon>Shewanellaceae</taxon>
        <taxon>Shewanella</taxon>
    </lineage>
</organism>
<gene>
    <name evidence="1" type="primary">leuC</name>
    <name type="ordered locus">Spea_3826</name>
</gene>
<reference key="1">
    <citation type="submission" date="2007-10" db="EMBL/GenBank/DDBJ databases">
        <title>Complete sequence of Shewanella pealeana ATCC 700345.</title>
        <authorList>
            <consortium name="US DOE Joint Genome Institute"/>
            <person name="Copeland A."/>
            <person name="Lucas S."/>
            <person name="Lapidus A."/>
            <person name="Barry K."/>
            <person name="Glavina del Rio T."/>
            <person name="Dalin E."/>
            <person name="Tice H."/>
            <person name="Pitluck S."/>
            <person name="Chertkov O."/>
            <person name="Brettin T."/>
            <person name="Bruce D."/>
            <person name="Detter J.C."/>
            <person name="Han C."/>
            <person name="Schmutz J."/>
            <person name="Larimer F."/>
            <person name="Land M."/>
            <person name="Hauser L."/>
            <person name="Kyrpides N."/>
            <person name="Kim E."/>
            <person name="Zhao J.-S.Z."/>
            <person name="Manno D."/>
            <person name="Hawari J."/>
            <person name="Richardson P."/>
        </authorList>
    </citation>
    <scope>NUCLEOTIDE SEQUENCE [LARGE SCALE GENOMIC DNA]</scope>
    <source>
        <strain>ATCC 700345 / ANG-SQ1</strain>
    </source>
</reference>
<protein>
    <recommendedName>
        <fullName evidence="1">3-isopropylmalate dehydratase large subunit</fullName>
        <ecNumber evidence="1">4.2.1.33</ecNumber>
    </recommendedName>
    <alternativeName>
        <fullName evidence="1">Alpha-IPM isomerase</fullName>
        <shortName evidence="1">IPMI</shortName>
    </alternativeName>
    <alternativeName>
        <fullName evidence="1">Isopropylmalate isomerase</fullName>
    </alternativeName>
</protein>